<proteinExistence type="inferred from homology"/>
<sequence length="90" mass="10845">MEQGQDTPWTQSTEHTNIQKRGSGQQTQRLEHPNSTRLMDHYLRIMSPVGMHKQIVYWKQWLSLKNPTQGSLKTRVLKRWKLFNKQEWIN</sequence>
<keyword id="KW-0053">Apoptosis</keyword>
<keyword id="KW-1035">Host cytoplasm</keyword>
<keyword id="KW-1043">Host membrane</keyword>
<keyword id="KW-1045">Host mitochondrion</keyword>
<keyword id="KW-1046">Host mitochondrion inner membrane</keyword>
<keyword id="KW-1048">Host nucleus</keyword>
<keyword id="KW-0945">Host-virus interaction</keyword>
<keyword id="KW-1090">Inhibition of host innate immune response by virus</keyword>
<keyword id="KW-1097">Inhibition of host MAVS by virus</keyword>
<keyword id="KW-1113">Inhibition of host RLR pathway by virus</keyword>
<keyword id="KW-0472">Membrane</keyword>
<keyword id="KW-1119">Modulation of host cell apoptosis by virus</keyword>
<keyword id="KW-0899">Viral immunoevasion</keyword>
<organism>
    <name type="scientific">Influenza A virus (strain A/Chicken/Hong Kong/YU562/2001 H5N1 genotype B)</name>
    <dbReference type="NCBI Taxonomy" id="196426"/>
    <lineage>
        <taxon>Viruses</taxon>
        <taxon>Riboviria</taxon>
        <taxon>Orthornavirae</taxon>
        <taxon>Negarnaviricota</taxon>
        <taxon>Polyploviricotina</taxon>
        <taxon>Insthoviricetes</taxon>
        <taxon>Articulavirales</taxon>
        <taxon>Orthomyxoviridae</taxon>
        <taxon>Alphainfluenzavirus</taxon>
        <taxon>Alphainfluenzavirus influenzae</taxon>
        <taxon>Influenza A virus</taxon>
    </lineage>
</organism>
<feature type="chain" id="PRO_0000311638" description="Protein PB1-F2">
    <location>
        <begin position="1"/>
        <end position="90"/>
    </location>
</feature>
<feature type="region of interest" description="Disordered" evidence="2">
    <location>
        <begin position="1"/>
        <end position="34"/>
    </location>
</feature>
<feature type="region of interest" description="Mitochondrial targeting sequence" evidence="1">
    <location>
        <begin position="65"/>
        <end position="87"/>
    </location>
</feature>
<feature type="compositionally biased region" description="Polar residues" evidence="2">
    <location>
        <begin position="1"/>
        <end position="28"/>
    </location>
</feature>
<feature type="site" description="Low pathogenicity" evidence="1">
    <location>
        <position position="66"/>
    </location>
</feature>
<dbReference type="EMBL" id="AF509170">
    <property type="status" value="NOT_ANNOTATED_CDS"/>
    <property type="molecule type" value="Genomic_DNA"/>
</dbReference>
<dbReference type="SMR" id="P0C5U7"/>
<dbReference type="GO" id="GO:0044164">
    <property type="term" value="C:host cell cytosol"/>
    <property type="evidence" value="ECO:0007669"/>
    <property type="project" value="UniProtKB-SubCell"/>
</dbReference>
<dbReference type="GO" id="GO:0044192">
    <property type="term" value="C:host cell mitochondrial inner membrane"/>
    <property type="evidence" value="ECO:0007669"/>
    <property type="project" value="UniProtKB-SubCell"/>
</dbReference>
<dbReference type="GO" id="GO:0042025">
    <property type="term" value="C:host cell nucleus"/>
    <property type="evidence" value="ECO:0007669"/>
    <property type="project" value="UniProtKB-SubCell"/>
</dbReference>
<dbReference type="GO" id="GO:0016020">
    <property type="term" value="C:membrane"/>
    <property type="evidence" value="ECO:0007669"/>
    <property type="project" value="UniProtKB-UniRule"/>
</dbReference>
<dbReference type="GO" id="GO:0052150">
    <property type="term" value="P:symbiont-mediated perturbation of host apoptosis"/>
    <property type="evidence" value="ECO:0007669"/>
    <property type="project" value="UniProtKB-KW"/>
</dbReference>
<dbReference type="GO" id="GO:0039545">
    <property type="term" value="P:symbiont-mediated suppression of host cytoplasmic pattern recognition receptor signaling pathway via inhibition of MAVS activity"/>
    <property type="evidence" value="ECO:0007669"/>
    <property type="project" value="UniProtKB-KW"/>
</dbReference>
<dbReference type="HAMAP" id="MF_04064">
    <property type="entry name" value="INFV_PB1F2"/>
    <property type="match status" value="1"/>
</dbReference>
<dbReference type="InterPro" id="IPR021045">
    <property type="entry name" value="Flu_proapoptotic_PB1-F2"/>
</dbReference>
<dbReference type="Pfam" id="PF11986">
    <property type="entry name" value="PB1-F2"/>
    <property type="match status" value="1"/>
</dbReference>
<organismHost>
    <name type="scientific">Aves</name>
    <dbReference type="NCBI Taxonomy" id="8782"/>
</organismHost>
<organismHost>
    <name type="scientific">Felis catus</name>
    <name type="common">Cat</name>
    <name type="synonym">Felis silvestris catus</name>
    <dbReference type="NCBI Taxonomy" id="9685"/>
</organismHost>
<organismHost>
    <name type="scientific">Homo sapiens</name>
    <name type="common">Human</name>
    <dbReference type="NCBI Taxonomy" id="9606"/>
</organismHost>
<organismHost>
    <name type="scientific">Panthera pardus</name>
    <name type="common">Leopard</name>
    <name type="synonym">Felis pardus</name>
    <dbReference type="NCBI Taxonomy" id="9691"/>
</organismHost>
<organismHost>
    <name type="scientific">Panthera tigris</name>
    <name type="common">Tiger</name>
    <dbReference type="NCBI Taxonomy" id="9694"/>
</organismHost>
<organismHost>
    <name type="scientific">Sus scrofa</name>
    <name type="common">Pig</name>
    <dbReference type="NCBI Taxonomy" id="9823"/>
</organismHost>
<accession>P0C5U7</accession>
<protein>
    <recommendedName>
        <fullName evidence="1">Protein PB1-F2</fullName>
    </recommendedName>
</protein>
<evidence type="ECO:0000255" key="1">
    <source>
        <dbReference type="HAMAP-Rule" id="MF_04064"/>
    </source>
</evidence>
<evidence type="ECO:0000256" key="2">
    <source>
        <dbReference type="SAM" id="MobiDB-lite"/>
    </source>
</evidence>
<gene>
    <name evidence="1" type="primary">PB1</name>
</gene>
<comment type="function">
    <text evidence="1">Plays an important role in promoting lung pathology in both primary viral infection and secondary bacterial infection. Promotes alteration of mitochondrial morphology, dissipation of mitochondrial membrane potential, and cell death. Alternatively, inhibits the production of interferon in the infected cell at the level of host mitochondrial antiviral signaling MAVS. Its level of expression differs greatly depending on which cell type is infected, in a manner that is independent of the levels of expression of other viral proteins. Monocytic cells are more affected than epithelial cells. Seems to disable virus-infected monocytes or other host innate immune cells. During early stage of infection, predisposes the mitochondria to permeability transition through interaction with host SLC25A6/ANT3 and VDAC1. These proteins participate in the formation of the permeability transition pore complex (PTPC) responsible of the release of mitochondrial products that triggers apoptosis.</text>
</comment>
<comment type="subunit">
    <text evidence="1">Oligomer. Interacts with human SLC25A6/ANT3 and VDAC1. Interacts with host MAVS.</text>
</comment>
<comment type="subcellular location">
    <subcellularLocation>
        <location evidence="1">Host mitochondrion inner membrane</location>
    </subcellularLocation>
    <subcellularLocation>
        <location evidence="1">Host nucleus</location>
    </subcellularLocation>
    <subcellularLocation>
        <location evidence="1">Host cytoplasm</location>
        <location evidence="1">Host cytosol</location>
    </subcellularLocation>
    <text evidence="1">Inner mitochondrial membrane in most cells types. Otherwise is detected in the nucleus and cytosol.</text>
</comment>
<comment type="miscellaneous">
    <text>Is not encoded in all strains, and seems to be dispensable for replication.</text>
</comment>
<comment type="similarity">
    <text evidence="1">Belongs to the influenza viruses PB1-F2 family.</text>
</comment>
<name>PB1F2_I01A1</name>
<reference key="1">
    <citation type="journal article" date="2002" name="Proc. Natl. Acad. Sci. U.S.A.">
        <title>Emergence of multiple genotypes of H5N1 avian influenza viruses in Hong Kong SAR.</title>
        <authorList>
            <person name="Guan Y."/>
            <person name="Peiris J.S.M."/>
            <person name="Lipatov A.S."/>
            <person name="Ellis T.M."/>
            <person name="Dyrting K.C."/>
            <person name="Krauss S."/>
            <person name="Zhang L.J."/>
            <person name="Webster R.G."/>
            <person name="Shortridge K.F."/>
        </authorList>
    </citation>
    <scope>NUCLEOTIDE SEQUENCE [GENOMIC RNA]</scope>
</reference>